<dbReference type="EC" id="5.1.1.1" evidence="1"/>
<dbReference type="EMBL" id="AE002098">
    <property type="protein sequence ID" value="AAF42000.1"/>
    <property type="molecule type" value="Genomic_DNA"/>
</dbReference>
<dbReference type="PIR" id="B81059">
    <property type="entry name" value="B81059"/>
</dbReference>
<dbReference type="RefSeq" id="NP_274656.1">
    <property type="nucleotide sequence ID" value="NC_003112.2"/>
</dbReference>
<dbReference type="RefSeq" id="WP_002224993.1">
    <property type="nucleotide sequence ID" value="NC_003112.2"/>
</dbReference>
<dbReference type="SMR" id="Q9JYC4"/>
<dbReference type="FunCoup" id="Q9JYC4">
    <property type="interactions" value="307"/>
</dbReference>
<dbReference type="STRING" id="122586.NMB1651"/>
<dbReference type="PaxDb" id="122586-NMB1651"/>
<dbReference type="KEGG" id="nme:NMB1651"/>
<dbReference type="PATRIC" id="fig|122586.8.peg.2124"/>
<dbReference type="HOGENOM" id="CLU_028393_1_0_4"/>
<dbReference type="InParanoid" id="Q9JYC4"/>
<dbReference type="OrthoDB" id="9813814at2"/>
<dbReference type="UniPathway" id="UPA00042">
    <property type="reaction ID" value="UER00497"/>
</dbReference>
<dbReference type="Proteomes" id="UP000000425">
    <property type="component" value="Chromosome"/>
</dbReference>
<dbReference type="GO" id="GO:0005829">
    <property type="term" value="C:cytosol"/>
    <property type="evidence" value="ECO:0000318"/>
    <property type="project" value="GO_Central"/>
</dbReference>
<dbReference type="GO" id="GO:0008784">
    <property type="term" value="F:alanine racemase activity"/>
    <property type="evidence" value="ECO:0000318"/>
    <property type="project" value="GO_Central"/>
</dbReference>
<dbReference type="GO" id="GO:0030170">
    <property type="term" value="F:pyridoxal phosphate binding"/>
    <property type="evidence" value="ECO:0000318"/>
    <property type="project" value="GO_Central"/>
</dbReference>
<dbReference type="GO" id="GO:0030632">
    <property type="term" value="P:D-alanine biosynthetic process"/>
    <property type="evidence" value="ECO:0000318"/>
    <property type="project" value="GO_Central"/>
</dbReference>
<dbReference type="CDD" id="cd06827">
    <property type="entry name" value="PLPDE_III_AR_proteobact"/>
    <property type="match status" value="1"/>
</dbReference>
<dbReference type="FunFam" id="3.20.20.10:FF:000002">
    <property type="entry name" value="Alanine racemase"/>
    <property type="match status" value="1"/>
</dbReference>
<dbReference type="Gene3D" id="3.20.20.10">
    <property type="entry name" value="Alanine racemase"/>
    <property type="match status" value="1"/>
</dbReference>
<dbReference type="Gene3D" id="2.40.37.10">
    <property type="entry name" value="Lyase, Ornithine Decarboxylase, Chain A, domain 1"/>
    <property type="match status" value="1"/>
</dbReference>
<dbReference type="HAMAP" id="MF_01201">
    <property type="entry name" value="Ala_racemase"/>
    <property type="match status" value="1"/>
</dbReference>
<dbReference type="InterPro" id="IPR000821">
    <property type="entry name" value="Ala_racemase"/>
</dbReference>
<dbReference type="InterPro" id="IPR009006">
    <property type="entry name" value="Ala_racemase/Decarboxylase_C"/>
</dbReference>
<dbReference type="InterPro" id="IPR011079">
    <property type="entry name" value="Ala_racemase_C"/>
</dbReference>
<dbReference type="InterPro" id="IPR001608">
    <property type="entry name" value="Ala_racemase_N"/>
</dbReference>
<dbReference type="InterPro" id="IPR020622">
    <property type="entry name" value="Ala_racemase_pyridoxalP-BS"/>
</dbReference>
<dbReference type="InterPro" id="IPR029066">
    <property type="entry name" value="PLP-binding_barrel"/>
</dbReference>
<dbReference type="NCBIfam" id="TIGR00492">
    <property type="entry name" value="alr"/>
    <property type="match status" value="1"/>
</dbReference>
<dbReference type="PANTHER" id="PTHR30511">
    <property type="entry name" value="ALANINE RACEMASE"/>
    <property type="match status" value="1"/>
</dbReference>
<dbReference type="PANTHER" id="PTHR30511:SF0">
    <property type="entry name" value="ALANINE RACEMASE, CATABOLIC-RELATED"/>
    <property type="match status" value="1"/>
</dbReference>
<dbReference type="Pfam" id="PF00842">
    <property type="entry name" value="Ala_racemase_C"/>
    <property type="match status" value="1"/>
</dbReference>
<dbReference type="Pfam" id="PF01168">
    <property type="entry name" value="Ala_racemase_N"/>
    <property type="match status" value="1"/>
</dbReference>
<dbReference type="PRINTS" id="PR00992">
    <property type="entry name" value="ALARACEMASE"/>
</dbReference>
<dbReference type="SMART" id="SM01005">
    <property type="entry name" value="Ala_racemase_C"/>
    <property type="match status" value="1"/>
</dbReference>
<dbReference type="SUPFAM" id="SSF50621">
    <property type="entry name" value="Alanine racemase C-terminal domain-like"/>
    <property type="match status" value="1"/>
</dbReference>
<dbReference type="SUPFAM" id="SSF51419">
    <property type="entry name" value="PLP-binding barrel"/>
    <property type="match status" value="1"/>
</dbReference>
<dbReference type="PROSITE" id="PS00395">
    <property type="entry name" value="ALANINE_RACEMASE"/>
    <property type="match status" value="1"/>
</dbReference>
<evidence type="ECO:0000255" key="1">
    <source>
        <dbReference type="HAMAP-Rule" id="MF_01201"/>
    </source>
</evidence>
<sequence>MRPLNVQIRLGNLRHNYRILKEMHGGKLLAVVKADAYGHGAVRCAFALADLADGFAVATIDEGIRLRESGITHPIVLLEGVFEASEYEAVEQYSLWPAVGNQWQLEALLIRHWKKTVKVWLKMDSGMHRTGFFPHDYASAYAALKQSEYVDSIVKFSHFSCADEPESGMTEIQMEAFDLGTEGLEGEESLANSAAILNVPEARRDWGRAGLALYGISPFGGGDDRLKPVMRLSTRIFGERVLQPHSPIGYGATFYTSKSTRVGLIACGYADGYPRRAPSNSPVAVDGKLTRVIGRVSMDMMTIELDASQEGLGHEVELWGDTVNINTVAEAAGTIPYELMCNIKRAKFTYIE</sequence>
<accession>Q9JYC4</accession>
<organism>
    <name type="scientific">Neisseria meningitidis serogroup B (strain ATCC BAA-335 / MC58)</name>
    <dbReference type="NCBI Taxonomy" id="122586"/>
    <lineage>
        <taxon>Bacteria</taxon>
        <taxon>Pseudomonadati</taxon>
        <taxon>Pseudomonadota</taxon>
        <taxon>Betaproteobacteria</taxon>
        <taxon>Neisseriales</taxon>
        <taxon>Neisseriaceae</taxon>
        <taxon>Neisseria</taxon>
    </lineage>
</organism>
<gene>
    <name type="primary">alr</name>
    <name type="ordered locus">NMB1651</name>
</gene>
<keyword id="KW-0413">Isomerase</keyword>
<keyword id="KW-0663">Pyridoxal phosphate</keyword>
<keyword id="KW-1185">Reference proteome</keyword>
<proteinExistence type="inferred from homology"/>
<comment type="function">
    <text evidence="1">Catalyzes the interconversion of L-alanine and D-alanine. May also act on other amino acids.</text>
</comment>
<comment type="catalytic activity">
    <reaction evidence="1">
        <text>L-alanine = D-alanine</text>
        <dbReference type="Rhea" id="RHEA:20249"/>
        <dbReference type="ChEBI" id="CHEBI:57416"/>
        <dbReference type="ChEBI" id="CHEBI:57972"/>
        <dbReference type="EC" id="5.1.1.1"/>
    </reaction>
</comment>
<comment type="cofactor">
    <cofactor evidence="1">
        <name>pyridoxal 5'-phosphate</name>
        <dbReference type="ChEBI" id="CHEBI:597326"/>
    </cofactor>
</comment>
<comment type="pathway">
    <text evidence="1">Amino-acid biosynthesis; D-alanine biosynthesis; D-alanine from L-alanine: step 1/1.</text>
</comment>
<comment type="similarity">
    <text evidence="1">Belongs to the alanine racemase family.</text>
</comment>
<protein>
    <recommendedName>
        <fullName evidence="1">Alanine racemase</fullName>
        <ecNumber evidence="1">5.1.1.1</ecNumber>
    </recommendedName>
</protein>
<name>ALR_NEIMB</name>
<feature type="chain" id="PRO_0000114541" description="Alanine racemase">
    <location>
        <begin position="1"/>
        <end position="352"/>
    </location>
</feature>
<feature type="active site" description="Proton acceptor; specific for D-alanine" evidence="1">
    <location>
        <position position="33"/>
    </location>
</feature>
<feature type="active site" description="Proton acceptor; specific for L-alanine" evidence="1">
    <location>
        <position position="250"/>
    </location>
</feature>
<feature type="binding site" evidence="1">
    <location>
        <position position="129"/>
    </location>
    <ligand>
        <name>substrate</name>
    </ligand>
</feature>
<feature type="binding site" evidence="1">
    <location>
        <position position="298"/>
    </location>
    <ligand>
        <name>substrate</name>
    </ligand>
</feature>
<feature type="modified residue" description="N6-(pyridoxal phosphate)lysine" evidence="1">
    <location>
        <position position="33"/>
    </location>
</feature>
<reference key="1">
    <citation type="journal article" date="2000" name="Science">
        <title>Complete genome sequence of Neisseria meningitidis serogroup B strain MC58.</title>
        <authorList>
            <person name="Tettelin H."/>
            <person name="Saunders N.J."/>
            <person name="Heidelberg J.F."/>
            <person name="Jeffries A.C."/>
            <person name="Nelson K.E."/>
            <person name="Eisen J.A."/>
            <person name="Ketchum K.A."/>
            <person name="Hood D.W."/>
            <person name="Peden J.F."/>
            <person name="Dodson R.J."/>
            <person name="Nelson W.C."/>
            <person name="Gwinn M.L."/>
            <person name="DeBoy R.T."/>
            <person name="Peterson J.D."/>
            <person name="Hickey E.K."/>
            <person name="Haft D.H."/>
            <person name="Salzberg S.L."/>
            <person name="White O."/>
            <person name="Fleischmann R.D."/>
            <person name="Dougherty B.A."/>
            <person name="Mason T.M."/>
            <person name="Ciecko A."/>
            <person name="Parksey D.S."/>
            <person name="Blair E."/>
            <person name="Cittone H."/>
            <person name="Clark E.B."/>
            <person name="Cotton M.D."/>
            <person name="Utterback T.R."/>
            <person name="Khouri H.M."/>
            <person name="Qin H."/>
            <person name="Vamathevan J.J."/>
            <person name="Gill J."/>
            <person name="Scarlato V."/>
            <person name="Masignani V."/>
            <person name="Pizza M."/>
            <person name="Grandi G."/>
            <person name="Sun L."/>
            <person name="Smith H.O."/>
            <person name="Fraser C.M."/>
            <person name="Moxon E.R."/>
            <person name="Rappuoli R."/>
            <person name="Venter J.C."/>
        </authorList>
    </citation>
    <scope>NUCLEOTIDE SEQUENCE [LARGE SCALE GENOMIC DNA]</scope>
    <source>
        <strain>ATCC BAA-335 / MC58</strain>
    </source>
</reference>